<dbReference type="EMBL" id="DQ213760">
    <property type="protein sequence ID" value="ACH43946.1"/>
    <property type="molecule type" value="mRNA"/>
</dbReference>
<dbReference type="RefSeq" id="NP_001232560.1">
    <property type="nucleotide sequence ID" value="NM_001245631.1"/>
</dbReference>
<dbReference type="SMR" id="B5FY35"/>
<dbReference type="FunCoup" id="B5FY35">
    <property type="interactions" value="1052"/>
</dbReference>
<dbReference type="STRING" id="59729.ENSTGUP00000026856"/>
<dbReference type="MEROPS" id="M67.971"/>
<dbReference type="GeneID" id="100190645"/>
<dbReference type="KEGG" id="tgu:100190645"/>
<dbReference type="CTD" id="8667"/>
<dbReference type="InParanoid" id="B5FY35"/>
<dbReference type="OrthoDB" id="10265695at2759"/>
<dbReference type="Proteomes" id="UP000007754">
    <property type="component" value="Unplaced"/>
</dbReference>
<dbReference type="GO" id="GO:0016282">
    <property type="term" value="C:eukaryotic 43S preinitiation complex"/>
    <property type="evidence" value="ECO:0007669"/>
    <property type="project" value="UniProtKB-UniRule"/>
</dbReference>
<dbReference type="GO" id="GO:0033290">
    <property type="term" value="C:eukaryotic 48S preinitiation complex"/>
    <property type="evidence" value="ECO:0007669"/>
    <property type="project" value="UniProtKB-UniRule"/>
</dbReference>
<dbReference type="GO" id="GO:0005852">
    <property type="term" value="C:eukaryotic translation initiation factor 3 complex"/>
    <property type="evidence" value="ECO:0000250"/>
    <property type="project" value="UniProtKB"/>
</dbReference>
<dbReference type="GO" id="GO:0008237">
    <property type="term" value="F:metallopeptidase activity"/>
    <property type="evidence" value="ECO:0007669"/>
    <property type="project" value="InterPro"/>
</dbReference>
<dbReference type="GO" id="GO:0003743">
    <property type="term" value="F:translation initiation factor activity"/>
    <property type="evidence" value="ECO:0007669"/>
    <property type="project" value="UniProtKB-UniRule"/>
</dbReference>
<dbReference type="GO" id="GO:0001732">
    <property type="term" value="P:formation of cytoplasmic translation initiation complex"/>
    <property type="evidence" value="ECO:0007669"/>
    <property type="project" value="UniProtKB-UniRule"/>
</dbReference>
<dbReference type="GO" id="GO:0006413">
    <property type="term" value="P:translational initiation"/>
    <property type="evidence" value="ECO:0000250"/>
    <property type="project" value="UniProtKB"/>
</dbReference>
<dbReference type="CDD" id="cd08065">
    <property type="entry name" value="MPN_eIF3h"/>
    <property type="match status" value="1"/>
</dbReference>
<dbReference type="FunFam" id="3.40.140.10:FF:000020">
    <property type="entry name" value="Eukaryotic translation initiation factor 3 subunit H"/>
    <property type="match status" value="1"/>
</dbReference>
<dbReference type="Gene3D" id="3.40.140.10">
    <property type="entry name" value="Cytidine Deaminase, domain 2"/>
    <property type="match status" value="1"/>
</dbReference>
<dbReference type="HAMAP" id="MF_03007">
    <property type="entry name" value="eIF3h"/>
    <property type="match status" value="1"/>
</dbReference>
<dbReference type="InterPro" id="IPR027524">
    <property type="entry name" value="eIF3h"/>
</dbReference>
<dbReference type="InterPro" id="IPR045810">
    <property type="entry name" value="eIF3h_C"/>
</dbReference>
<dbReference type="InterPro" id="IPR000555">
    <property type="entry name" value="JAMM/MPN+_dom"/>
</dbReference>
<dbReference type="InterPro" id="IPR050242">
    <property type="entry name" value="JAMM_MPN+_peptidase_M67A"/>
</dbReference>
<dbReference type="InterPro" id="IPR037518">
    <property type="entry name" value="MPN"/>
</dbReference>
<dbReference type="PANTHER" id="PTHR10410">
    <property type="entry name" value="EUKARYOTIC TRANSLATION INITIATION FACTOR 3 -RELATED"/>
    <property type="match status" value="1"/>
</dbReference>
<dbReference type="Pfam" id="PF19445">
    <property type="entry name" value="eIF3h_C"/>
    <property type="match status" value="1"/>
</dbReference>
<dbReference type="Pfam" id="PF01398">
    <property type="entry name" value="JAB"/>
    <property type="match status" value="1"/>
</dbReference>
<dbReference type="SMART" id="SM00232">
    <property type="entry name" value="JAB_MPN"/>
    <property type="match status" value="1"/>
</dbReference>
<dbReference type="PROSITE" id="PS50249">
    <property type="entry name" value="MPN"/>
    <property type="match status" value="1"/>
</dbReference>
<evidence type="ECO:0000255" key="1">
    <source>
        <dbReference type="HAMAP-Rule" id="MF_03007"/>
    </source>
</evidence>
<evidence type="ECO:0000255" key="2">
    <source>
        <dbReference type="PROSITE-ProRule" id="PRU01182"/>
    </source>
</evidence>
<evidence type="ECO:0000256" key="3">
    <source>
        <dbReference type="SAM" id="MobiDB-lite"/>
    </source>
</evidence>
<name>EIF3H_TAEGU</name>
<accession>B5FY35</accession>
<reference key="1">
    <citation type="journal article" date="2006" name="Proc. Natl. Acad. Sci. U.S.A.">
        <title>A molecular neuroethological approach for identifying and characterizing a cascade of behaviorally regulated genes.</title>
        <authorList>
            <person name="Wada K."/>
            <person name="Howard J.T."/>
            <person name="McConnell P."/>
            <person name="Whitney O."/>
            <person name="Lints T."/>
            <person name="Rivas M.V."/>
            <person name="Horita H."/>
            <person name="Patterson M.A."/>
            <person name="White S.A."/>
            <person name="Scharff C."/>
            <person name="Haesler S."/>
            <person name="Zhao S."/>
            <person name="Sakaguchi H."/>
            <person name="Hagiwara M."/>
            <person name="Shiraki T."/>
            <person name="Hirozane-Kishikawa T."/>
            <person name="Skene P."/>
            <person name="Hayashizaki Y."/>
            <person name="Carninci P."/>
            <person name="Jarvis E.D."/>
        </authorList>
    </citation>
    <scope>NUCLEOTIDE SEQUENCE [LARGE SCALE MRNA]</scope>
    <source>
        <tissue>Brain</tissue>
    </source>
</reference>
<gene>
    <name evidence="1" type="primary">EIF3H</name>
    <name evidence="1" type="synonym">EIF3S3</name>
</gene>
<proteinExistence type="evidence at transcript level"/>
<feature type="chain" id="PRO_0000365175" description="Eukaryotic translation initiation factor 3 subunit H">
    <location>
        <begin position="1"/>
        <end position="348"/>
    </location>
</feature>
<feature type="domain" description="MPN" evidence="2">
    <location>
        <begin position="35"/>
        <end position="169"/>
    </location>
</feature>
<feature type="region of interest" description="Disordered" evidence="3">
    <location>
        <begin position="267"/>
        <end position="311"/>
    </location>
</feature>
<feature type="compositionally biased region" description="Low complexity" evidence="3">
    <location>
        <begin position="267"/>
        <end position="285"/>
    </location>
</feature>
<sequence>MASRKEGSGAAGGGFGSAKGKGKAAAAGDSAVKQVQIDGLVVLKIIKHYQEEGQGNEVVQGVLLGLVVDDRLEITNCFPFPQHTEDDADFDEVQYQMEMMRSLRHVNIDHLHVGWYQSTYYGSFVTRALLDSQFSYQHAIEESVVLIYDPIKTAQGSLSLKAYRLTPKLMEVCKEKDFSPEALKKANIAYENMFEEVPIVIKNSYLINVMLWELEKKSAVADRHELLSLASSNHLGKSLQLLMDRVDEMSQDIVKYNTYLRNVSKQQQQKHQYQQRRQQENIQRQSRGEPPLPEEDINKLFKPPQPPPRMESLLIAGQINTYCQNIKEFNAQNLGKLFMAQALQDYNN</sequence>
<protein>
    <recommendedName>
        <fullName evidence="1">Eukaryotic translation initiation factor 3 subunit H</fullName>
        <shortName evidence="1">eIF3h</shortName>
    </recommendedName>
    <alternativeName>
        <fullName evidence="1">Eukaryotic translation initiation factor 3 subunit 3</fullName>
    </alternativeName>
    <alternativeName>
        <fullName>eIF-3-gamma</fullName>
    </alternativeName>
    <alternativeName>
        <fullName evidence="1">eIF3 p40 subunit</fullName>
    </alternativeName>
</protein>
<keyword id="KW-0963">Cytoplasm</keyword>
<keyword id="KW-0396">Initiation factor</keyword>
<keyword id="KW-0648">Protein biosynthesis</keyword>
<keyword id="KW-1185">Reference proteome</keyword>
<comment type="function">
    <text evidence="1">Component of the eukaryotic translation initiation factor 3 (eIF-3) complex, which is involved in protein synthesis of a specialized repertoire of mRNAs and, together with other initiation factors, stimulates binding of mRNA and methionyl-tRNAi to the 40S ribosome. The eIF-3 complex specifically targets and initiates translation of a subset of mRNAs involved in cell proliferation.</text>
</comment>
<comment type="subunit">
    <text evidence="1">Component of the eukaryotic translation initiation factor 3 (eIF-3) complex, which is composed of 13 subunits: EIF3A, EIF3B, EIF3C, EIF3D, EIF3E, EIF3F, EIF3G, EIF3H, EIF3I, EIF3J, EIF3K, EIF3L and EIF3M.</text>
</comment>
<comment type="subcellular location">
    <subcellularLocation>
        <location evidence="1">Cytoplasm</location>
    </subcellularLocation>
</comment>
<comment type="similarity">
    <text evidence="1">Belongs to the eIF-3 subunit H family.</text>
</comment>
<organism>
    <name type="scientific">Taeniopygia guttata</name>
    <name type="common">Zebra finch</name>
    <name type="synonym">Poephila guttata</name>
    <dbReference type="NCBI Taxonomy" id="59729"/>
    <lineage>
        <taxon>Eukaryota</taxon>
        <taxon>Metazoa</taxon>
        <taxon>Chordata</taxon>
        <taxon>Craniata</taxon>
        <taxon>Vertebrata</taxon>
        <taxon>Euteleostomi</taxon>
        <taxon>Archelosauria</taxon>
        <taxon>Archosauria</taxon>
        <taxon>Dinosauria</taxon>
        <taxon>Saurischia</taxon>
        <taxon>Theropoda</taxon>
        <taxon>Coelurosauria</taxon>
        <taxon>Aves</taxon>
        <taxon>Neognathae</taxon>
        <taxon>Neoaves</taxon>
        <taxon>Telluraves</taxon>
        <taxon>Australaves</taxon>
        <taxon>Passeriformes</taxon>
        <taxon>Passeroidea</taxon>
        <taxon>Estrildidae</taxon>
        <taxon>Estrildinae</taxon>
        <taxon>Taeniopygia</taxon>
    </lineage>
</organism>